<reference key="1">
    <citation type="journal article" date="2003" name="Nucleic Acids Res.">
        <title>The complete genome sequence and analysis of Corynebacterium diphtheriae NCTC13129.</title>
        <authorList>
            <person name="Cerdeno-Tarraga A.-M."/>
            <person name="Efstratiou A."/>
            <person name="Dover L.G."/>
            <person name="Holden M.T.G."/>
            <person name="Pallen M.J."/>
            <person name="Bentley S.D."/>
            <person name="Besra G.S."/>
            <person name="Churcher C.M."/>
            <person name="James K.D."/>
            <person name="De Zoysa A."/>
            <person name="Chillingworth T."/>
            <person name="Cronin A."/>
            <person name="Dowd L."/>
            <person name="Feltwell T."/>
            <person name="Hamlin N."/>
            <person name="Holroyd S."/>
            <person name="Jagels K."/>
            <person name="Moule S."/>
            <person name="Quail M.A."/>
            <person name="Rabbinowitsch E."/>
            <person name="Rutherford K.M."/>
            <person name="Thomson N.R."/>
            <person name="Unwin L."/>
            <person name="Whitehead S."/>
            <person name="Barrell B.G."/>
            <person name="Parkhill J."/>
        </authorList>
    </citation>
    <scope>NUCLEOTIDE SEQUENCE [LARGE SCALE GENOMIC DNA]</scope>
    <source>
        <strain>ATCC 700971 / NCTC 13129 / Biotype gravis</strain>
    </source>
</reference>
<keyword id="KW-0312">Gluconeogenesis</keyword>
<keyword id="KW-0324">Glycolysis</keyword>
<keyword id="KW-0413">Isomerase</keyword>
<keyword id="KW-1185">Reference proteome</keyword>
<accession>Q6NJL2</accession>
<organism>
    <name type="scientific">Corynebacterium diphtheriae (strain ATCC 700971 / NCTC 13129 / Biotype gravis)</name>
    <dbReference type="NCBI Taxonomy" id="257309"/>
    <lineage>
        <taxon>Bacteria</taxon>
        <taxon>Bacillati</taxon>
        <taxon>Actinomycetota</taxon>
        <taxon>Actinomycetes</taxon>
        <taxon>Mycobacteriales</taxon>
        <taxon>Corynebacteriaceae</taxon>
        <taxon>Corynebacterium</taxon>
    </lineage>
</organism>
<proteinExistence type="inferred from homology"/>
<sequence length="248" mass="27303">MTTGKLILLRHGQSEWNASNQFTGWVDVNLTEKGEAEAKRGGELLKAQGVLPSVVYTSLLRRAIRTANIALNAADRHWIPVVRDWRLNERHYGALQGLNKAETKEKYGDEQFMAWRRSYGTPPPELEDSSEFSQANDPRYANLDVVPRTECLKDVVERFVPYFKEEILPRVKNGETVLIAAHGNSLRALVKHLDNISDADIAELNIPTGIPLVYELDEAGTVLNPGGTYLDPEAAAAGAAAVAAQGAK</sequence>
<protein>
    <recommendedName>
        <fullName evidence="1">2,3-bisphosphoglycerate-dependent phosphoglycerate mutase</fullName>
        <shortName evidence="1">BPG-dependent PGAM</shortName>
        <shortName evidence="1">PGAM</shortName>
        <shortName evidence="1">Phosphoglyceromutase</shortName>
        <shortName evidence="1">dPGM</shortName>
        <ecNumber evidence="1">5.4.2.11</ecNumber>
    </recommendedName>
</protein>
<gene>
    <name evidence="1" type="primary">gpmA</name>
    <name type="synonym">gpm</name>
    <name type="ordered locus">DIP0389</name>
</gene>
<name>GPMA_CORDI</name>
<dbReference type="EC" id="5.4.2.11" evidence="1"/>
<dbReference type="EMBL" id="BX248355">
    <property type="protein sequence ID" value="CAE48893.1"/>
    <property type="status" value="ALT_INIT"/>
    <property type="molecule type" value="Genomic_DNA"/>
</dbReference>
<dbReference type="RefSeq" id="WP_014302869.1">
    <property type="nucleotide sequence ID" value="NC_002935.2"/>
</dbReference>
<dbReference type="SMR" id="Q6NJL2"/>
<dbReference type="STRING" id="257309.DIP0389"/>
<dbReference type="KEGG" id="cdi:DIP0389"/>
<dbReference type="HOGENOM" id="CLU_033323_1_1_11"/>
<dbReference type="UniPathway" id="UPA00109">
    <property type="reaction ID" value="UER00186"/>
</dbReference>
<dbReference type="Proteomes" id="UP000002198">
    <property type="component" value="Chromosome"/>
</dbReference>
<dbReference type="GO" id="GO:0004619">
    <property type="term" value="F:phosphoglycerate mutase activity"/>
    <property type="evidence" value="ECO:0007669"/>
    <property type="project" value="UniProtKB-EC"/>
</dbReference>
<dbReference type="GO" id="GO:0006094">
    <property type="term" value="P:gluconeogenesis"/>
    <property type="evidence" value="ECO:0007669"/>
    <property type="project" value="UniProtKB-UniRule"/>
</dbReference>
<dbReference type="GO" id="GO:0006096">
    <property type="term" value="P:glycolytic process"/>
    <property type="evidence" value="ECO:0007669"/>
    <property type="project" value="UniProtKB-UniRule"/>
</dbReference>
<dbReference type="CDD" id="cd07067">
    <property type="entry name" value="HP_PGM_like"/>
    <property type="match status" value="1"/>
</dbReference>
<dbReference type="FunFam" id="3.40.50.1240:FF:000003">
    <property type="entry name" value="2,3-bisphosphoglycerate-dependent phosphoglycerate mutase"/>
    <property type="match status" value="1"/>
</dbReference>
<dbReference type="Gene3D" id="3.40.50.1240">
    <property type="entry name" value="Phosphoglycerate mutase-like"/>
    <property type="match status" value="1"/>
</dbReference>
<dbReference type="HAMAP" id="MF_01039">
    <property type="entry name" value="PGAM_GpmA"/>
    <property type="match status" value="1"/>
</dbReference>
<dbReference type="InterPro" id="IPR013078">
    <property type="entry name" value="His_Pase_superF_clade-1"/>
</dbReference>
<dbReference type="InterPro" id="IPR029033">
    <property type="entry name" value="His_PPase_superfam"/>
</dbReference>
<dbReference type="InterPro" id="IPR001345">
    <property type="entry name" value="PG/BPGM_mutase_AS"/>
</dbReference>
<dbReference type="InterPro" id="IPR005952">
    <property type="entry name" value="Phosphogly_mut1"/>
</dbReference>
<dbReference type="NCBIfam" id="TIGR01258">
    <property type="entry name" value="pgm_1"/>
    <property type="match status" value="1"/>
</dbReference>
<dbReference type="NCBIfam" id="NF010713">
    <property type="entry name" value="PRK14115.1"/>
    <property type="match status" value="1"/>
</dbReference>
<dbReference type="NCBIfam" id="NF010718">
    <property type="entry name" value="PRK14120.1"/>
    <property type="match status" value="1"/>
</dbReference>
<dbReference type="PANTHER" id="PTHR11931">
    <property type="entry name" value="PHOSPHOGLYCERATE MUTASE"/>
    <property type="match status" value="1"/>
</dbReference>
<dbReference type="Pfam" id="PF00300">
    <property type="entry name" value="His_Phos_1"/>
    <property type="match status" value="2"/>
</dbReference>
<dbReference type="PIRSF" id="PIRSF000709">
    <property type="entry name" value="6PFK_2-Ptase"/>
    <property type="match status" value="1"/>
</dbReference>
<dbReference type="SMART" id="SM00855">
    <property type="entry name" value="PGAM"/>
    <property type="match status" value="1"/>
</dbReference>
<dbReference type="SUPFAM" id="SSF53254">
    <property type="entry name" value="Phosphoglycerate mutase-like"/>
    <property type="match status" value="1"/>
</dbReference>
<dbReference type="PROSITE" id="PS00175">
    <property type="entry name" value="PG_MUTASE"/>
    <property type="match status" value="1"/>
</dbReference>
<feature type="chain" id="PRO_0000179869" description="2,3-bisphosphoglycerate-dependent phosphoglycerate mutase">
    <location>
        <begin position="1"/>
        <end position="248"/>
    </location>
</feature>
<feature type="active site" description="Tele-phosphohistidine intermediate" evidence="1">
    <location>
        <position position="11"/>
    </location>
</feature>
<feature type="active site" description="Proton donor/acceptor" evidence="1">
    <location>
        <position position="89"/>
    </location>
</feature>
<feature type="binding site" evidence="1">
    <location>
        <begin position="10"/>
        <end position="17"/>
    </location>
    <ligand>
        <name>substrate</name>
    </ligand>
</feature>
<feature type="binding site" evidence="1">
    <location>
        <begin position="23"/>
        <end position="24"/>
    </location>
    <ligand>
        <name>substrate</name>
    </ligand>
</feature>
<feature type="binding site" evidence="1">
    <location>
        <position position="62"/>
    </location>
    <ligand>
        <name>substrate</name>
    </ligand>
</feature>
<feature type="binding site" evidence="1">
    <location>
        <begin position="89"/>
        <end position="92"/>
    </location>
    <ligand>
        <name>substrate</name>
    </ligand>
</feature>
<feature type="binding site" evidence="1">
    <location>
        <position position="100"/>
    </location>
    <ligand>
        <name>substrate</name>
    </ligand>
</feature>
<feature type="binding site" evidence="1">
    <location>
        <begin position="116"/>
        <end position="117"/>
    </location>
    <ligand>
        <name>substrate</name>
    </ligand>
</feature>
<feature type="binding site" evidence="1">
    <location>
        <begin position="183"/>
        <end position="184"/>
    </location>
    <ligand>
        <name>substrate</name>
    </ligand>
</feature>
<feature type="site" description="Transition state stabilizer" evidence="1">
    <location>
        <position position="182"/>
    </location>
</feature>
<comment type="function">
    <text evidence="1">Catalyzes the interconversion of 2-phosphoglycerate and 3-phosphoglycerate.</text>
</comment>
<comment type="catalytic activity">
    <reaction evidence="1">
        <text>(2R)-2-phosphoglycerate = (2R)-3-phosphoglycerate</text>
        <dbReference type="Rhea" id="RHEA:15901"/>
        <dbReference type="ChEBI" id="CHEBI:58272"/>
        <dbReference type="ChEBI" id="CHEBI:58289"/>
        <dbReference type="EC" id="5.4.2.11"/>
    </reaction>
</comment>
<comment type="pathway">
    <text evidence="1">Carbohydrate degradation; glycolysis; pyruvate from D-glyceraldehyde 3-phosphate: step 3/5.</text>
</comment>
<comment type="similarity">
    <text evidence="1">Belongs to the phosphoglycerate mutase family. BPG-dependent PGAM subfamily.</text>
</comment>
<comment type="sequence caution" evidence="2">
    <conflict type="erroneous initiation">
        <sequence resource="EMBL-CDS" id="CAE48893"/>
    </conflict>
    <text>Extended N-terminus.</text>
</comment>
<evidence type="ECO:0000255" key="1">
    <source>
        <dbReference type="HAMAP-Rule" id="MF_01039"/>
    </source>
</evidence>
<evidence type="ECO:0000305" key="2"/>